<proteinExistence type="evidence at protein level"/>
<reference key="1">
    <citation type="journal article" date="1991" name="DNA Seq.">
        <title>A gene encoding a tyrosine tRNA synthetase is located near sacS in Bacillus subtilis.</title>
        <authorList>
            <person name="Glaser P."/>
            <person name="Kunst F."/>
            <person name="Debarbouille M."/>
            <person name="Vertes A."/>
            <person name="Danchin A."/>
            <person name="Dedonder R."/>
        </authorList>
    </citation>
    <scope>NUCLEOTIDE SEQUENCE [GENOMIC DNA]</scope>
    <source>
        <strain>168</strain>
    </source>
</reference>
<reference key="2">
    <citation type="journal article" date="1993" name="Mol. Microbiol.">
        <title>Bacillus subtilis genome project: cloning and sequencing of the 97 kb region from 325 degrees to 333 degrees.</title>
        <authorList>
            <person name="Glaser P."/>
            <person name="Kunst F."/>
            <person name="Arnaud M."/>
            <person name="Coudart M.P."/>
            <person name="Gonzales W."/>
            <person name="Hullo M.-F."/>
            <person name="Ionescu M."/>
            <person name="Lubochinsky B."/>
            <person name="Marcelino L."/>
            <person name="Moszer I."/>
            <person name="Presecan E."/>
            <person name="Santana M."/>
            <person name="Schneider E."/>
            <person name="Schweizer J."/>
            <person name="Vertes A."/>
            <person name="Rapoport G."/>
            <person name="Danchin A."/>
        </authorList>
    </citation>
    <scope>NUCLEOTIDE SEQUENCE [GENOMIC DNA]</scope>
    <source>
        <strain>168</strain>
    </source>
</reference>
<reference key="3">
    <citation type="journal article" date="1997" name="Nature">
        <title>The complete genome sequence of the Gram-positive bacterium Bacillus subtilis.</title>
        <authorList>
            <person name="Kunst F."/>
            <person name="Ogasawara N."/>
            <person name="Moszer I."/>
            <person name="Albertini A.M."/>
            <person name="Alloni G."/>
            <person name="Azevedo V."/>
            <person name="Bertero M.G."/>
            <person name="Bessieres P."/>
            <person name="Bolotin A."/>
            <person name="Borchert S."/>
            <person name="Borriss R."/>
            <person name="Boursier L."/>
            <person name="Brans A."/>
            <person name="Braun M."/>
            <person name="Brignell S.C."/>
            <person name="Bron S."/>
            <person name="Brouillet S."/>
            <person name="Bruschi C.V."/>
            <person name="Caldwell B."/>
            <person name="Capuano V."/>
            <person name="Carter N.M."/>
            <person name="Choi S.-K."/>
            <person name="Codani J.-J."/>
            <person name="Connerton I.F."/>
            <person name="Cummings N.J."/>
            <person name="Daniel R.A."/>
            <person name="Denizot F."/>
            <person name="Devine K.M."/>
            <person name="Duesterhoeft A."/>
            <person name="Ehrlich S.D."/>
            <person name="Emmerson P.T."/>
            <person name="Entian K.-D."/>
            <person name="Errington J."/>
            <person name="Fabret C."/>
            <person name="Ferrari E."/>
            <person name="Foulger D."/>
            <person name="Fritz C."/>
            <person name="Fujita M."/>
            <person name="Fujita Y."/>
            <person name="Fuma S."/>
            <person name="Galizzi A."/>
            <person name="Galleron N."/>
            <person name="Ghim S.-Y."/>
            <person name="Glaser P."/>
            <person name="Goffeau A."/>
            <person name="Golightly E.J."/>
            <person name="Grandi G."/>
            <person name="Guiseppi G."/>
            <person name="Guy B.J."/>
            <person name="Haga K."/>
            <person name="Haiech J."/>
            <person name="Harwood C.R."/>
            <person name="Henaut A."/>
            <person name="Hilbert H."/>
            <person name="Holsappel S."/>
            <person name="Hosono S."/>
            <person name="Hullo M.-F."/>
            <person name="Itaya M."/>
            <person name="Jones L.-M."/>
            <person name="Joris B."/>
            <person name="Karamata D."/>
            <person name="Kasahara Y."/>
            <person name="Klaerr-Blanchard M."/>
            <person name="Klein C."/>
            <person name="Kobayashi Y."/>
            <person name="Koetter P."/>
            <person name="Koningstein G."/>
            <person name="Krogh S."/>
            <person name="Kumano M."/>
            <person name="Kurita K."/>
            <person name="Lapidus A."/>
            <person name="Lardinois S."/>
            <person name="Lauber J."/>
            <person name="Lazarevic V."/>
            <person name="Lee S.-M."/>
            <person name="Levine A."/>
            <person name="Liu H."/>
            <person name="Masuda S."/>
            <person name="Mauel C."/>
            <person name="Medigue C."/>
            <person name="Medina N."/>
            <person name="Mellado R.P."/>
            <person name="Mizuno M."/>
            <person name="Moestl D."/>
            <person name="Nakai S."/>
            <person name="Noback M."/>
            <person name="Noone D."/>
            <person name="O'Reilly M."/>
            <person name="Ogawa K."/>
            <person name="Ogiwara A."/>
            <person name="Oudega B."/>
            <person name="Park S.-H."/>
            <person name="Parro V."/>
            <person name="Pohl T.M."/>
            <person name="Portetelle D."/>
            <person name="Porwollik S."/>
            <person name="Prescott A.M."/>
            <person name="Presecan E."/>
            <person name="Pujic P."/>
            <person name="Purnelle B."/>
            <person name="Rapoport G."/>
            <person name="Rey M."/>
            <person name="Reynolds S."/>
            <person name="Rieger M."/>
            <person name="Rivolta C."/>
            <person name="Rocha E."/>
            <person name="Roche B."/>
            <person name="Rose M."/>
            <person name="Sadaie Y."/>
            <person name="Sato T."/>
            <person name="Scanlan E."/>
            <person name="Schleich S."/>
            <person name="Schroeter R."/>
            <person name="Scoffone F."/>
            <person name="Sekiguchi J."/>
            <person name="Sekowska A."/>
            <person name="Seror S.J."/>
            <person name="Serror P."/>
            <person name="Shin B.-S."/>
            <person name="Soldo B."/>
            <person name="Sorokin A."/>
            <person name="Tacconi E."/>
            <person name="Takagi T."/>
            <person name="Takahashi H."/>
            <person name="Takemaru K."/>
            <person name="Takeuchi M."/>
            <person name="Tamakoshi A."/>
            <person name="Tanaka T."/>
            <person name="Terpstra P."/>
            <person name="Tognoni A."/>
            <person name="Tosato V."/>
            <person name="Uchiyama S."/>
            <person name="Vandenbol M."/>
            <person name="Vannier F."/>
            <person name="Vassarotti A."/>
            <person name="Viari A."/>
            <person name="Wambutt R."/>
            <person name="Wedler E."/>
            <person name="Wedler H."/>
            <person name="Weitzenegger T."/>
            <person name="Winters P."/>
            <person name="Wipat A."/>
            <person name="Yamamoto H."/>
            <person name="Yamane K."/>
            <person name="Yasumoto K."/>
            <person name="Yata K."/>
            <person name="Yoshida K."/>
            <person name="Yoshikawa H.-F."/>
            <person name="Zumstein E."/>
            <person name="Yoshikawa H."/>
            <person name="Danchin A."/>
        </authorList>
    </citation>
    <scope>NUCLEOTIDE SEQUENCE [LARGE SCALE GENOMIC DNA]</scope>
    <source>
        <strain>168</strain>
    </source>
</reference>
<reference key="4">
    <citation type="journal article" date="1995" name="J. Bacteriol.">
        <title>A gene at 333 degrees on the Bacillus subtilis chromosome encodes the newly identified sigma B-dependent general stress protein GspA.</title>
        <authorList>
            <person name="Antelmann H."/>
            <person name="Bernhardt J."/>
            <person name="Schmid R."/>
            <person name="Hecker M."/>
        </authorList>
    </citation>
    <scope>PROTEIN SEQUENCE OF 1-28</scope>
    <scope>CHARACTERIZATION</scope>
    <scope>INDUCTION</scope>
</reference>
<reference key="5">
    <citation type="journal article" date="1990" name="Gene">
        <title>Nucleotide sequence of the sacS locus of Bacillus subtilis reveals the presence of two regulatory genes.</title>
        <authorList>
            <person name="Zukowski M.M."/>
            <person name="Miller L."/>
            <person name="Cosgwell P."/>
            <person name="Chen K."/>
            <person name="Aymerich S."/>
            <person name="Steinmetz M."/>
        </authorList>
    </citation>
    <scope>NUCLEOTIDE SEQUENCE [GENOMIC DNA] OF 110-286</scope>
    <source>
        <strain>QB1072</strain>
    </source>
</reference>
<feature type="chain" id="PRO_0000083867" description="General stress protein A">
    <location>
        <begin position="1"/>
        <end position="286"/>
    </location>
</feature>
<feature type="binding site" evidence="1">
    <location>
        <begin position="12"/>
        <end position="17"/>
    </location>
    <ligand>
        <name>UDP</name>
        <dbReference type="ChEBI" id="CHEBI:58223"/>
    </ligand>
</feature>
<feature type="binding site" evidence="1">
    <location>
        <begin position="111"/>
        <end position="112"/>
    </location>
    <ligand>
        <name>UDP</name>
        <dbReference type="ChEBI" id="CHEBI:58223"/>
    </ligand>
</feature>
<feature type="binding site" evidence="1">
    <location>
        <position position="111"/>
    </location>
    <ligand>
        <name>Mn(2+)</name>
        <dbReference type="ChEBI" id="CHEBI:29035"/>
    </ligand>
</feature>
<feature type="binding site" evidence="1">
    <location>
        <position position="113"/>
    </location>
    <ligand>
        <name>Mn(2+)</name>
        <dbReference type="ChEBI" id="CHEBI:29035"/>
    </ligand>
</feature>
<feature type="binding site" evidence="1">
    <location>
        <begin position="247"/>
        <end position="253"/>
    </location>
    <ligand>
        <name>UDP</name>
        <dbReference type="ChEBI" id="CHEBI:58223"/>
    </ligand>
</feature>
<feature type="binding site" evidence="1">
    <location>
        <position position="247"/>
    </location>
    <ligand>
        <name>Mn(2+)</name>
        <dbReference type="ChEBI" id="CHEBI:29035"/>
    </ligand>
</feature>
<feature type="sequence conflict" description="In Ref. 4; AA sequence." evidence="3" ref="4">
    <original>C</original>
    <variation>A</variation>
    <location>
        <position position="12"/>
    </location>
</feature>
<feature type="sequence conflict" description="In Ref. 4; AA sequence." evidence="3" ref="4">
    <original>S</original>
    <variation>V</variation>
    <location>
        <position position="27"/>
    </location>
</feature>
<sequence length="286" mass="33522">MRKDEIMHIVSCADDNYARHLGGMFVSLLTNMDQEREVKLYVIDGGIKPDNKKRLEETTLKFGVPIEFLEVDTNMYEHAVESSHITKAAYYRISIPDLIKDESIKRMIYIDCDALVLEDISKLWDLDIAPYTVAAVEDAGQHERLKEMNVTDTGKYFNSGIMIIDFESWRKQNITEKVINFINEHPDEDFLVLHDQDALNAILYDQWYELHPRWNAQTYIMLKLKTPSTLLGRKQYNETRENPAIVHFCGGEKPWNSNTKHPYRDEYFHYMSYTKWNTIGNPAINQ</sequence>
<accession>P25148</accession>
<keyword id="KW-0903">Direct protein sequencing</keyword>
<keyword id="KW-0328">Glycosyltransferase</keyword>
<keyword id="KW-0464">Manganese</keyword>
<keyword id="KW-0479">Metal-binding</keyword>
<keyword id="KW-0547">Nucleotide-binding</keyword>
<keyword id="KW-1185">Reference proteome</keyword>
<keyword id="KW-0346">Stress response</keyword>
<keyword id="KW-0808">Transferase</keyword>
<organism>
    <name type="scientific">Bacillus subtilis (strain 168)</name>
    <dbReference type="NCBI Taxonomy" id="224308"/>
    <lineage>
        <taxon>Bacteria</taxon>
        <taxon>Bacillati</taxon>
        <taxon>Bacillota</taxon>
        <taxon>Bacilli</taxon>
        <taxon>Bacillales</taxon>
        <taxon>Bacillaceae</taxon>
        <taxon>Bacillus</taxon>
    </lineage>
</organism>
<name>GSPA_BACSU</name>
<dbReference type="EMBL" id="X52480">
    <property type="protein sequence ID" value="CAA36721.1"/>
    <property type="status" value="ALT_INIT"/>
    <property type="molecule type" value="Genomic_DNA"/>
</dbReference>
<dbReference type="EMBL" id="X73124">
    <property type="protein sequence ID" value="CAA51568.1"/>
    <property type="molecule type" value="Genomic_DNA"/>
</dbReference>
<dbReference type="EMBL" id="AL009126">
    <property type="protein sequence ID" value="CAB15869.1"/>
    <property type="molecule type" value="Genomic_DNA"/>
</dbReference>
<dbReference type="EMBL" id="M29333">
    <property type="protein sequence ID" value="AAA75337.1"/>
    <property type="molecule type" value="Genomic_DNA"/>
</dbReference>
<dbReference type="PIR" id="S16423">
    <property type="entry name" value="S16423"/>
</dbReference>
<dbReference type="RefSeq" id="NP_391722.1">
    <property type="nucleotide sequence ID" value="NC_000964.3"/>
</dbReference>
<dbReference type="RefSeq" id="WP_003242748.1">
    <property type="nucleotide sequence ID" value="NZ_OZ025638.1"/>
</dbReference>
<dbReference type="SMR" id="P25148"/>
<dbReference type="FunCoup" id="P25148">
    <property type="interactions" value="109"/>
</dbReference>
<dbReference type="STRING" id="224308.BSU38430"/>
<dbReference type="CAZy" id="GT8">
    <property type="family name" value="Glycosyltransferase Family 8"/>
</dbReference>
<dbReference type="PaxDb" id="224308-BSU38430"/>
<dbReference type="DNASU" id="937339"/>
<dbReference type="EnsemblBacteria" id="CAB15869">
    <property type="protein sequence ID" value="CAB15869"/>
    <property type="gene ID" value="BSU_38430"/>
</dbReference>
<dbReference type="GeneID" id="937339"/>
<dbReference type="KEGG" id="bsu:BSU38430"/>
<dbReference type="PATRIC" id="fig|224308.179.peg.4160"/>
<dbReference type="eggNOG" id="COG1442">
    <property type="taxonomic scope" value="Bacteria"/>
</dbReference>
<dbReference type="InParanoid" id="P25148"/>
<dbReference type="OrthoDB" id="5672604at2"/>
<dbReference type="PhylomeDB" id="P25148"/>
<dbReference type="BioCyc" id="BSUB:BSU38430-MONOMER"/>
<dbReference type="Proteomes" id="UP000001570">
    <property type="component" value="Chromosome"/>
</dbReference>
<dbReference type="GO" id="GO:0016757">
    <property type="term" value="F:glycosyltransferase activity"/>
    <property type="evidence" value="ECO:0007669"/>
    <property type="project" value="UniProtKB-KW"/>
</dbReference>
<dbReference type="GO" id="GO:0046872">
    <property type="term" value="F:metal ion binding"/>
    <property type="evidence" value="ECO:0007669"/>
    <property type="project" value="UniProtKB-KW"/>
</dbReference>
<dbReference type="GO" id="GO:0000166">
    <property type="term" value="F:nucleotide binding"/>
    <property type="evidence" value="ECO:0007669"/>
    <property type="project" value="UniProtKB-KW"/>
</dbReference>
<dbReference type="CDD" id="cd04194">
    <property type="entry name" value="GT8_A4GalT_like"/>
    <property type="match status" value="1"/>
</dbReference>
<dbReference type="Gene3D" id="3.90.550.10">
    <property type="entry name" value="Spore Coat Polysaccharide Biosynthesis Protein SpsA, Chain A"/>
    <property type="match status" value="1"/>
</dbReference>
<dbReference type="InterPro" id="IPR002495">
    <property type="entry name" value="Glyco_trans_8"/>
</dbReference>
<dbReference type="InterPro" id="IPR050748">
    <property type="entry name" value="Glycosyltrans_8_dom-fam"/>
</dbReference>
<dbReference type="InterPro" id="IPR029044">
    <property type="entry name" value="Nucleotide-diphossugar_trans"/>
</dbReference>
<dbReference type="PANTHER" id="PTHR13778">
    <property type="entry name" value="GLYCOSYLTRANSFERASE 8 DOMAIN-CONTAINING PROTEIN"/>
    <property type="match status" value="1"/>
</dbReference>
<dbReference type="PANTHER" id="PTHR13778:SF47">
    <property type="entry name" value="LIPOPOLYSACCHARIDE 1,3-GALACTOSYLTRANSFERASE"/>
    <property type="match status" value="1"/>
</dbReference>
<dbReference type="Pfam" id="PF01501">
    <property type="entry name" value="Glyco_transf_8"/>
    <property type="match status" value="1"/>
</dbReference>
<dbReference type="SUPFAM" id="SSF53448">
    <property type="entry name" value="Nucleotide-diphospho-sugar transferases"/>
    <property type="match status" value="1"/>
</dbReference>
<evidence type="ECO:0000250" key="1">
    <source>
        <dbReference type="UniProtKB" id="A0A0H2URJ6"/>
    </source>
</evidence>
<evidence type="ECO:0000269" key="2">
    <source>
    </source>
</evidence>
<evidence type="ECO:0000305" key="3"/>
<gene>
    <name type="primary">gspA</name>
    <name type="synonym">ywaG</name>
    <name type="ordered locus">BSU38430</name>
    <name type="ORF">ipa-12d</name>
</gene>
<comment type="induction">
    <text evidence="2">By different stresses such as heat shock and salt stress and by starvation.</text>
</comment>
<comment type="similarity">
    <text evidence="3">Belongs to the glycosyltransferase 8 family.</text>
</comment>
<comment type="sequence caution" evidence="3">
    <conflict type="erroneous initiation">
        <sequence resource="EMBL-CDS" id="CAA36721"/>
    </conflict>
    <text>Truncated N-terminus.</text>
</comment>
<protein>
    <recommendedName>
        <fullName>General stress protein A</fullName>
    </recommendedName>
</protein>